<gene>
    <name type="primary">PH</name>
    <name type="synonym">P29</name>
    <name type="synonym">POLH</name>
</gene>
<feature type="chain" id="PRO_0000217258" description="Polyhedrin">
    <location>
        <begin position="1"/>
        <end position="249"/>
    </location>
</feature>
<protein>
    <recommendedName>
        <fullName>Polyhedrin</fullName>
    </recommendedName>
    <alternativeName>
        <fullName>Major occlusion protein</fullName>
    </alternativeName>
</protein>
<evidence type="ECO:0000305" key="1"/>
<reference key="1">
    <citation type="journal article" date="1994" name="Biochim. Biophys. Acta">
        <title>Nucleotide sequence of the polyhedrin gene of Spodoptera littoralis multiple nucleocapsid nuclear polyhedrosis virus.</title>
        <authorList>
            <person name="Croizier L."/>
            <person name="Croizier G."/>
        </authorList>
    </citation>
    <scope>NUCLEOTIDE SEQUENCE [GENOMIC DNA]</scope>
</reference>
<dbReference type="EMBL" id="D01017">
    <property type="protein sequence ID" value="BAA00824.1"/>
    <property type="molecule type" value="Genomic_DNA"/>
</dbReference>
<dbReference type="PIR" id="S47638">
    <property type="entry name" value="JU0382"/>
</dbReference>
<dbReference type="SMR" id="P24646"/>
<dbReference type="GO" id="GO:0039679">
    <property type="term" value="C:viral occlusion body"/>
    <property type="evidence" value="ECO:0007669"/>
    <property type="project" value="UniProtKB-KW"/>
</dbReference>
<dbReference type="GO" id="GO:0005198">
    <property type="term" value="F:structural molecule activity"/>
    <property type="evidence" value="ECO:0007669"/>
    <property type="project" value="InterPro"/>
</dbReference>
<dbReference type="InterPro" id="IPR001746">
    <property type="entry name" value="Polyhedrin"/>
</dbReference>
<dbReference type="Pfam" id="PF00738">
    <property type="entry name" value="Polyhedrin"/>
    <property type="match status" value="1"/>
</dbReference>
<organismHost>
    <name type="scientific">Lepidoptera</name>
    <name type="common">butterflies and moths</name>
    <dbReference type="NCBI Taxonomy" id="7088"/>
</organismHost>
<comment type="function">
    <text>Major component of the virus occlusion bodies, which are large proteinaceous structures (polyhedra), that protect the virus from the outside environment for extended periods until they are ingested by insect larvae.</text>
</comment>
<comment type="similarity">
    <text evidence="1">Belongs to the polyhedrin family.</text>
</comment>
<sequence length="249" mass="29252">MYSRYSAYNYSPHLGKTYVYDNKYYKNLGHVIKNAKRKHDALEREADERELDHLDKYLVAEDPFMGPGKNQKLTLFKEIRNVKPDTMKLIVNWNGKEFLRETWTRFMEDSFPIVNDQEVMDVFLVVNMRPTRPNRCFRFLAQHALRCDPEYVPHDVIRIVEPSYVGTNNEYRISLAKKGGGCPVMNLHAEYTTSFESFIDKVIWYNFYKPIVYVGTDSAEEEEILLEVSLVFKIKEFAPDAPLYTGPAY</sequence>
<accession>P24646</accession>
<proteinExistence type="inferred from homology"/>
<organism>
    <name type="scientific">Spodoptera littoralis nuclear polyhedrosis virus</name>
    <name type="common">SlNPV</name>
    <dbReference type="NCBI Taxonomy" id="10456"/>
    <lineage>
        <taxon>Viruses</taxon>
        <taxon>Viruses incertae sedis</taxon>
        <taxon>Naldaviricetes</taxon>
        <taxon>Lefavirales</taxon>
        <taxon>Baculoviridae</taxon>
        <taxon>Alphabaculovirus</taxon>
        <taxon>Alphabaculovirus splittoralis</taxon>
    </lineage>
</organism>
<keyword id="KW-0842">Viral occlusion body</keyword>
<name>PYHD_NPVSL</name>